<sequence length="1141" mass="118749">MRRRDVAFCLLLLPAFMTQAVYGQRKKGPKPNTLARKNDFQDAICFIDVVFILDSSESSKIVLFDNQKDFVDSLSEKIFQLTPGRSLKYDIKLAALQFSSSVQIDPPLSSWKDLRTFKQRVKSLNLIGQGTFSYYAISNATRLLKREGRKDGVKVALLMTDGIDHPKSPDVQSISEDARILGISFITVGLSTVVNEAKLRLISGDPSNEPVLLLSDPTLVDRIQERLGVLFERKCEHKICECEKGEPGDPGPPGTHGNPGIKGERGPKGNPGDAQKGETGERGPVGIPGYKGDKGERGECGKPGMKGDKGPEGPYGPKGPRGIQGIGGPPGDPGPKGFQGNKGEPGPPGPYGPPGAPGIGQQGVKGERGQEGRMGAPGPIGIGEPGQPGPRGPEGAPGERGLPGEGFPGPKGEKGSEGPIGPQGLQGLSIKGDKGDLGPVGPQGPAGIPGIGSQGEQGIQGPSGPPGPQGPPGQGSPGPKGEVGQMGPTGPRGPMGIGVQGPKGEPGTVGLPGQPGVPGEDGASGKKGEAGLPGTRGPEGMPGKGQPGPKGDEGKKGSKGNQGQRGFPGPEGPKGEPGVMGPFGMPGASIPGPSGPKGDRGGPGMPGLKGEPGLPVRGPKGAQGPRGPVGAPGLKGDGYPGVAGPRGLPGPPGPMGLRGVGDTGAKGEPGVRGPPGPSGPRGIGTQGPKGDTGQKGLPGPPGPPGYGSQGIKGEQGPQGFPGSKGTVGLGLPGQKGEHGDRGDVGRKGEKGETGEPGSPGKQGLQGPKGDLGLTKEEIIKLIIEICGCGPKCKETPLELVFVIDSSESVGPENFQIIQSFVKTLADRVALDLGTARIGIINYSHKVEKVASLKQFSSKDDFKLVVDNMQYLGEGTYTATALQAANDMFKEARPGVKKVALVITDGQTDSRDKKKLADVVKDANDSNVEIFVIGVVKKDDPNFEIFHKEMNLIATDAEHVYQFDDFFTLQDTLKQKLSKKICEDFDSYLIQVFGSPSFQPEFGVSEREVSVSTPKPAKEMSKSFNVSRGQNEETESYVLTEAGILAIPTPPEATNTLEPLLSSREGVETRTPNPNLLQSEKSLYKDPRCEEALKPGECGDYVVRWYYDKQVNSCARFWFSGCNGSGNRFHSEKECRETCIKQ</sequence>
<gene>
    <name type="primary">Col28a1</name>
    <name type="synonym">Col28</name>
</gene>
<organism>
    <name type="scientific">Mus musculus</name>
    <name type="common">Mouse</name>
    <dbReference type="NCBI Taxonomy" id="10090"/>
    <lineage>
        <taxon>Eukaryota</taxon>
        <taxon>Metazoa</taxon>
        <taxon>Chordata</taxon>
        <taxon>Craniata</taxon>
        <taxon>Vertebrata</taxon>
        <taxon>Euteleostomi</taxon>
        <taxon>Mammalia</taxon>
        <taxon>Eutheria</taxon>
        <taxon>Euarchontoglires</taxon>
        <taxon>Glires</taxon>
        <taxon>Rodentia</taxon>
        <taxon>Myomorpha</taxon>
        <taxon>Muroidea</taxon>
        <taxon>Muridae</taxon>
        <taxon>Murinae</taxon>
        <taxon>Mus</taxon>
        <taxon>Mus</taxon>
    </lineage>
</organism>
<comment type="function">
    <text>May act as a cell-binding protein.</text>
</comment>
<comment type="subunit">
    <text evidence="5">Trimer or homomer. Secreted into as a 135 kDa monomer under reducing conditions and as a homotrimer under non-reducing conditions.</text>
</comment>
<comment type="subcellular location">
    <subcellularLocation>
        <location evidence="5">Secreted</location>
        <location evidence="5">Extracellular space</location>
        <location evidence="5">Extracellular matrix</location>
        <location evidence="5">Basement membrane</location>
    </subcellularLocation>
</comment>
<comment type="alternative products">
    <event type="alternative splicing"/>
    <isoform>
        <id>Q2UY11-1</id>
        <name>1</name>
        <sequence type="displayed"/>
    </isoform>
    <isoform>
        <id>Q2UY11-2</id>
        <name>2</name>
        <sequence type="described" ref="VSP_031095 VSP_031096"/>
    </isoform>
</comment>
<comment type="tissue specificity">
    <text evidence="5">Expressed in skin, intestine, sternum, brain and kidney. Lower expression is also observed in heart, lung, sciatic nerve, dorsal root ganglia, peripheral nerves and calvaria of newborn mice and in intestine and brain of adult mice. Found in basement membrane surrounding a particular subset of Schwann cells in adult sciatic nerve.</text>
</comment>
<comment type="developmental stage">
    <text evidence="5">Major expression in dorsal root ganglia and peripheral nerves, with small amounts in connective tissues like calvaria and skin.</text>
</comment>
<comment type="similarity">
    <text evidence="7">Belongs to the VWA-containing collagen family.</text>
</comment>
<reference key="1">
    <citation type="journal article" date="2006" name="J. Biol. Chem.">
        <title>Collagen XXVIII, a novel von Willebrand factor A domain-containing protein with many imperfections in the collagenous domain.</title>
        <authorList>
            <person name="Veit G."/>
            <person name="Kobbe B."/>
            <person name="Keene D.R."/>
            <person name="Paulsson M."/>
            <person name="Koch M."/>
            <person name="Wagener R."/>
        </authorList>
    </citation>
    <scope>NUCLEOTIDE SEQUENCE [MRNA] (ISOFORMS 1 AND 2)</scope>
    <scope>SUBUNITS</scope>
    <scope>SUBCELLULAR LOCATION</scope>
    <scope>TISSUE SPECIFICITY</scope>
    <scope>DEVELOPMENTAL STAGE</scope>
    <source>
        <strain>C57BL/6J</strain>
        <tissue>Brain</tissue>
        <tissue>Limb</tissue>
    </source>
</reference>
<dbReference type="EMBL" id="AJ890449">
    <property type="protein sequence ID" value="CAI67593.1"/>
    <property type="molecule type" value="mRNA"/>
</dbReference>
<dbReference type="EMBL" id="AJ890450">
    <property type="protein sequence ID" value="CAI67594.1"/>
    <property type="molecule type" value="mRNA"/>
</dbReference>
<dbReference type="CCDS" id="CCDS39424.1">
    <molecule id="Q2UY11-1"/>
</dbReference>
<dbReference type="RefSeq" id="NP_001032954.1">
    <molecule id="Q2UY11-1"/>
    <property type="nucleotide sequence ID" value="NM_001037865.1"/>
</dbReference>
<dbReference type="RefSeq" id="XP_006505094.1">
    <molecule id="Q2UY11-1"/>
    <property type="nucleotide sequence ID" value="XM_006505031.2"/>
</dbReference>
<dbReference type="RefSeq" id="XP_006505095.1">
    <property type="nucleotide sequence ID" value="XM_006505032.3"/>
</dbReference>
<dbReference type="RefSeq" id="XP_017176991.1">
    <molecule id="Q2UY11-1"/>
    <property type="nucleotide sequence ID" value="XM_017321502.1"/>
</dbReference>
<dbReference type="SMR" id="Q2UY11"/>
<dbReference type="ComplexPortal" id="CPX-3029">
    <property type="entry name" value="Collagen type XXVIII trimer"/>
</dbReference>
<dbReference type="FunCoup" id="Q2UY11">
    <property type="interactions" value="202"/>
</dbReference>
<dbReference type="STRING" id="10090.ENSMUSP00000111199"/>
<dbReference type="PhosphoSitePlus" id="Q2UY11"/>
<dbReference type="jPOST" id="Q2UY11"/>
<dbReference type="PaxDb" id="10090-ENSMUSP00000111199"/>
<dbReference type="ProteomicsDB" id="277995">
    <molecule id="Q2UY11-1"/>
</dbReference>
<dbReference type="ProteomicsDB" id="277996">
    <molecule id="Q2UY11-2"/>
</dbReference>
<dbReference type="Antibodypedia" id="71450">
    <property type="antibodies" value="23 antibodies from 11 providers"/>
</dbReference>
<dbReference type="DNASU" id="213945"/>
<dbReference type="Ensembl" id="ENSMUST00000115537.2">
    <molecule id="Q2UY11-1"/>
    <property type="protein sequence ID" value="ENSMUSP00000111199.2"/>
    <property type="gene ID" value="ENSMUSG00000068794.8"/>
</dbReference>
<dbReference type="GeneID" id="213945"/>
<dbReference type="KEGG" id="mmu:213945"/>
<dbReference type="UCSC" id="uc009axi.1">
    <molecule id="Q2UY11-1"/>
    <property type="organism name" value="mouse"/>
</dbReference>
<dbReference type="AGR" id="MGI:2685312"/>
<dbReference type="CTD" id="340267"/>
<dbReference type="MGI" id="MGI:2685312">
    <property type="gene designation" value="Col28a1"/>
</dbReference>
<dbReference type="VEuPathDB" id="HostDB:ENSMUSG00000068794"/>
<dbReference type="eggNOG" id="KOG1217">
    <property type="taxonomic scope" value="Eukaryota"/>
</dbReference>
<dbReference type="eggNOG" id="KOG3544">
    <property type="taxonomic scope" value="Eukaryota"/>
</dbReference>
<dbReference type="GeneTree" id="ENSGT00940000161647"/>
<dbReference type="HOGENOM" id="CLU_009158_0_0_1"/>
<dbReference type="InParanoid" id="Q2UY11"/>
<dbReference type="OMA" id="ILFEEKC"/>
<dbReference type="OrthoDB" id="687730at2759"/>
<dbReference type="PhylomeDB" id="Q2UY11"/>
<dbReference type="TreeFam" id="TF331207"/>
<dbReference type="Reactome" id="R-MMU-1650814">
    <property type="pathway name" value="Collagen biosynthesis and modifying enzymes"/>
</dbReference>
<dbReference type="Reactome" id="R-MMU-8948216">
    <property type="pathway name" value="Collagen chain trimerization"/>
</dbReference>
<dbReference type="BioGRID-ORCS" id="213945">
    <property type="hits" value="1 hit in 79 CRISPR screens"/>
</dbReference>
<dbReference type="ChiTaRS" id="Col28a1">
    <property type="organism name" value="mouse"/>
</dbReference>
<dbReference type="PRO" id="PR:Q2UY11"/>
<dbReference type="Proteomes" id="UP000000589">
    <property type="component" value="Chromosome 6"/>
</dbReference>
<dbReference type="RNAct" id="Q2UY11">
    <property type="molecule type" value="protein"/>
</dbReference>
<dbReference type="Bgee" id="ENSMUSG00000068794">
    <property type="expression patterns" value="Expressed in spermatocyte and 38 other cell types or tissues"/>
</dbReference>
<dbReference type="ExpressionAtlas" id="Q2UY11">
    <property type="expression patterns" value="baseline and differential"/>
</dbReference>
<dbReference type="GO" id="GO:0005604">
    <property type="term" value="C:basement membrane"/>
    <property type="evidence" value="ECO:0000314"/>
    <property type="project" value="MGI"/>
</dbReference>
<dbReference type="GO" id="GO:0005581">
    <property type="term" value="C:collagen trimer"/>
    <property type="evidence" value="ECO:0007669"/>
    <property type="project" value="UniProtKB-KW"/>
</dbReference>
<dbReference type="GO" id="GO:0062023">
    <property type="term" value="C:collagen-containing extracellular matrix"/>
    <property type="evidence" value="ECO:0007005"/>
    <property type="project" value="BHF-UCL"/>
</dbReference>
<dbReference type="GO" id="GO:0005576">
    <property type="term" value="C:extracellular region"/>
    <property type="evidence" value="ECO:0007669"/>
    <property type="project" value="UniProtKB-KW"/>
</dbReference>
<dbReference type="GO" id="GO:0004867">
    <property type="term" value="F:serine-type endopeptidase inhibitor activity"/>
    <property type="evidence" value="ECO:0007669"/>
    <property type="project" value="UniProtKB-KW"/>
</dbReference>
<dbReference type="GO" id="GO:0007155">
    <property type="term" value="P:cell adhesion"/>
    <property type="evidence" value="ECO:0007669"/>
    <property type="project" value="UniProtKB-KW"/>
</dbReference>
<dbReference type="CDD" id="cd01450">
    <property type="entry name" value="vWFA_subfamily_ECM"/>
    <property type="match status" value="2"/>
</dbReference>
<dbReference type="FunFam" id="3.40.50.410:FF:000003">
    <property type="entry name" value="Collagen type VI alpha 3 chain"/>
    <property type="match status" value="1"/>
</dbReference>
<dbReference type="FunFam" id="3.40.50.410:FF:000051">
    <property type="entry name" value="Collagen type XXVIII alpha 1 chain"/>
    <property type="match status" value="1"/>
</dbReference>
<dbReference type="FunFam" id="4.10.410.10:FF:000020">
    <property type="entry name" value="Collagen, type VI, alpha 3"/>
    <property type="match status" value="1"/>
</dbReference>
<dbReference type="Gene3D" id="4.10.410.10">
    <property type="entry name" value="Pancreatic trypsin inhibitor Kunitz domain"/>
    <property type="match status" value="1"/>
</dbReference>
<dbReference type="Gene3D" id="3.40.50.410">
    <property type="entry name" value="von Willebrand factor, type A domain"/>
    <property type="match status" value="2"/>
</dbReference>
<dbReference type="InterPro" id="IPR050149">
    <property type="entry name" value="Collagen_superfamily"/>
</dbReference>
<dbReference type="InterPro" id="IPR002223">
    <property type="entry name" value="Kunitz_BPTI"/>
</dbReference>
<dbReference type="InterPro" id="IPR036880">
    <property type="entry name" value="Kunitz_BPTI_sf"/>
</dbReference>
<dbReference type="InterPro" id="IPR020901">
    <property type="entry name" value="Prtase_inh_Kunz-CS"/>
</dbReference>
<dbReference type="InterPro" id="IPR002035">
    <property type="entry name" value="VWF_A"/>
</dbReference>
<dbReference type="InterPro" id="IPR036465">
    <property type="entry name" value="vWFA_dom_sf"/>
</dbReference>
<dbReference type="PANTHER" id="PTHR24023">
    <property type="entry name" value="COLLAGEN ALPHA"/>
    <property type="match status" value="1"/>
</dbReference>
<dbReference type="PANTHER" id="PTHR24023:SF1082">
    <property type="entry name" value="COLLAGEN TRIPLE HELIX REPEAT"/>
    <property type="match status" value="1"/>
</dbReference>
<dbReference type="Pfam" id="PF00014">
    <property type="entry name" value="Kunitz_BPTI"/>
    <property type="match status" value="1"/>
</dbReference>
<dbReference type="Pfam" id="PF00092">
    <property type="entry name" value="VWA"/>
    <property type="match status" value="2"/>
</dbReference>
<dbReference type="PRINTS" id="PR00453">
    <property type="entry name" value="VWFADOMAIN"/>
</dbReference>
<dbReference type="SMART" id="SM00131">
    <property type="entry name" value="KU"/>
    <property type="match status" value="1"/>
</dbReference>
<dbReference type="SMART" id="SM00327">
    <property type="entry name" value="VWA"/>
    <property type="match status" value="2"/>
</dbReference>
<dbReference type="SUPFAM" id="SSF57362">
    <property type="entry name" value="BPTI-like"/>
    <property type="match status" value="1"/>
</dbReference>
<dbReference type="SUPFAM" id="SSF53300">
    <property type="entry name" value="vWA-like"/>
    <property type="match status" value="2"/>
</dbReference>
<dbReference type="PROSITE" id="PS00280">
    <property type="entry name" value="BPTI_KUNITZ_1"/>
    <property type="match status" value="1"/>
</dbReference>
<dbReference type="PROSITE" id="PS50279">
    <property type="entry name" value="BPTI_KUNITZ_2"/>
    <property type="match status" value="1"/>
</dbReference>
<dbReference type="PROSITE" id="PS50234">
    <property type="entry name" value="VWFA"/>
    <property type="match status" value="2"/>
</dbReference>
<protein>
    <recommendedName>
        <fullName>Collagen alpha-1(XXVIII) chain</fullName>
    </recommendedName>
</protein>
<keyword id="KW-0025">Alternative splicing</keyword>
<keyword id="KW-0084">Basement membrane</keyword>
<keyword id="KW-0130">Cell adhesion</keyword>
<keyword id="KW-0176">Collagen</keyword>
<keyword id="KW-1015">Disulfide bond</keyword>
<keyword id="KW-0272">Extracellular matrix</keyword>
<keyword id="KW-0646">Protease inhibitor</keyword>
<keyword id="KW-1185">Reference proteome</keyword>
<keyword id="KW-0677">Repeat</keyword>
<keyword id="KW-0964">Secreted</keyword>
<keyword id="KW-0722">Serine protease inhibitor</keyword>
<keyword id="KW-0732">Signal</keyword>
<feature type="signal peptide" evidence="1">
    <location>
        <begin position="1"/>
        <end position="20"/>
    </location>
</feature>
<feature type="chain" id="PRO_5000074665" description="Collagen alpha-1(XXVIII) chain">
    <location>
        <begin position="21"/>
        <end position="1141"/>
    </location>
</feature>
<feature type="domain" description="VWFA 1" evidence="3">
    <location>
        <begin position="48"/>
        <end position="227"/>
    </location>
</feature>
<feature type="domain" description="Collagen-like 1">
    <location>
        <begin position="243"/>
        <end position="300"/>
    </location>
</feature>
<feature type="domain" description="Collagen-like 2">
    <location>
        <begin position="301"/>
        <end position="358"/>
    </location>
</feature>
<feature type="domain" description="Collagen-like 3">
    <location>
        <begin position="501"/>
        <end position="544"/>
    </location>
</feature>
<feature type="domain" description="Collagen-like 4">
    <location>
        <begin position="545"/>
        <end position="588"/>
    </location>
</feature>
<feature type="domain" description="Collagen-like 5">
    <location>
        <begin position="733"/>
        <end position="769"/>
    </location>
</feature>
<feature type="domain" description="VWFA 2" evidence="3">
    <location>
        <begin position="798"/>
        <end position="976"/>
    </location>
</feature>
<feature type="domain" description="BPTI/Kunitz inhibitor" evidence="2">
    <location>
        <begin position="1088"/>
        <end position="1138"/>
    </location>
</feature>
<feature type="region of interest" description="Disordered" evidence="4">
    <location>
        <begin position="242"/>
        <end position="770"/>
    </location>
</feature>
<feature type="compositionally biased region" description="Basic and acidic residues" evidence="4">
    <location>
        <begin position="291"/>
        <end position="311"/>
    </location>
</feature>
<feature type="compositionally biased region" description="Low complexity" evidence="4">
    <location>
        <begin position="335"/>
        <end position="344"/>
    </location>
</feature>
<feature type="compositionally biased region" description="Pro residues" evidence="4">
    <location>
        <begin position="345"/>
        <end position="356"/>
    </location>
</feature>
<feature type="compositionally biased region" description="Basic and acidic residues" evidence="4">
    <location>
        <begin position="735"/>
        <end position="753"/>
    </location>
</feature>
<feature type="disulfide bond" evidence="2">
    <location>
        <begin position="1088"/>
        <end position="1138"/>
    </location>
</feature>
<feature type="disulfide bond" evidence="2">
    <location>
        <begin position="1097"/>
        <end position="1121"/>
    </location>
</feature>
<feature type="disulfide bond" evidence="2">
    <location>
        <begin position="1113"/>
        <end position="1134"/>
    </location>
</feature>
<feature type="splice variant" id="VSP_031095" description="In isoform 2." evidence="6">
    <original>GEPGVRGPPGPSGPRGIGTQGPKGDTGQKGLPG</original>
    <variation>VRFLKEAKILVFKKVLIDDFGKCVLFLSGTQEE</variation>
    <location>
        <begin position="667"/>
        <end position="699"/>
    </location>
</feature>
<feature type="splice variant" id="VSP_031096" description="In isoform 2." evidence="6">
    <location>
        <begin position="700"/>
        <end position="1141"/>
    </location>
</feature>
<proteinExistence type="evidence at transcript level"/>
<name>COSA1_MOUSE</name>
<evidence type="ECO:0000255" key="1"/>
<evidence type="ECO:0000255" key="2">
    <source>
        <dbReference type="PROSITE-ProRule" id="PRU00031"/>
    </source>
</evidence>
<evidence type="ECO:0000255" key="3">
    <source>
        <dbReference type="PROSITE-ProRule" id="PRU00219"/>
    </source>
</evidence>
<evidence type="ECO:0000256" key="4">
    <source>
        <dbReference type="SAM" id="MobiDB-lite"/>
    </source>
</evidence>
<evidence type="ECO:0000269" key="5">
    <source>
    </source>
</evidence>
<evidence type="ECO:0000303" key="6">
    <source>
    </source>
</evidence>
<evidence type="ECO:0000305" key="7"/>
<accession>Q2UY11</accession>
<accession>Q2UY10</accession>